<gene>
    <name evidence="2" type="primary">tuf</name>
    <name type="ordered locus">Mflv_5075</name>
</gene>
<sequence>MAKAKFERTKPHVNIGTIGHVDHGKTTLTAAITKVLHDQYPDLNESRAFDQIDNAPEERQRGITINISHVEYQTEKRHYAHVDAPGHADYIKNMITGAAQMDGAILVVAATDGPMPQTREHVLLARQVGVPYILVALNKADMVDDEELIELVEMEVRELLAAQDFDEDAPVVKVSALKALEGDEKWVKSVQELMAAVDESIPDPVRETDKPFLMPVEDVFTITGRGTVVTGRVERGVINVNEEVEIVGIRPTVTKTTVTGVEMFRKLLDQGQAGDNVGLLVRGIKREDVERGQVVVKPGTTTPHTEFEGSVYILSKDEGGRHTPFFNNYRPQFYFRTTDVTGVVTLPEGTEMVMPGDNTDIAVKLIQPVAMDEGLRFAIREGGRTVGAGRVTKIIK</sequence>
<dbReference type="EC" id="3.6.5.3" evidence="2"/>
<dbReference type="EMBL" id="CP000656">
    <property type="protein sequence ID" value="ABP47541.1"/>
    <property type="molecule type" value="Genomic_DNA"/>
</dbReference>
<dbReference type="SMR" id="A4T1R2"/>
<dbReference type="STRING" id="350054.Mflv_5075"/>
<dbReference type="KEGG" id="mgi:Mflv_5075"/>
<dbReference type="eggNOG" id="COG0050">
    <property type="taxonomic scope" value="Bacteria"/>
</dbReference>
<dbReference type="HOGENOM" id="CLU_007265_0_1_11"/>
<dbReference type="OrthoDB" id="9803139at2"/>
<dbReference type="GO" id="GO:0005829">
    <property type="term" value="C:cytosol"/>
    <property type="evidence" value="ECO:0007669"/>
    <property type="project" value="TreeGrafter"/>
</dbReference>
<dbReference type="GO" id="GO:0005525">
    <property type="term" value="F:GTP binding"/>
    <property type="evidence" value="ECO:0007669"/>
    <property type="project" value="UniProtKB-UniRule"/>
</dbReference>
<dbReference type="GO" id="GO:0003924">
    <property type="term" value="F:GTPase activity"/>
    <property type="evidence" value="ECO:0007669"/>
    <property type="project" value="InterPro"/>
</dbReference>
<dbReference type="GO" id="GO:0003746">
    <property type="term" value="F:translation elongation factor activity"/>
    <property type="evidence" value="ECO:0007669"/>
    <property type="project" value="UniProtKB-UniRule"/>
</dbReference>
<dbReference type="CDD" id="cd01884">
    <property type="entry name" value="EF_Tu"/>
    <property type="match status" value="1"/>
</dbReference>
<dbReference type="CDD" id="cd03697">
    <property type="entry name" value="EFTU_II"/>
    <property type="match status" value="1"/>
</dbReference>
<dbReference type="CDD" id="cd03707">
    <property type="entry name" value="EFTU_III"/>
    <property type="match status" value="1"/>
</dbReference>
<dbReference type="FunFam" id="2.40.30.10:FF:000001">
    <property type="entry name" value="Elongation factor Tu"/>
    <property type="match status" value="1"/>
</dbReference>
<dbReference type="FunFam" id="3.40.50.300:FF:000003">
    <property type="entry name" value="Elongation factor Tu"/>
    <property type="match status" value="1"/>
</dbReference>
<dbReference type="Gene3D" id="3.40.50.300">
    <property type="entry name" value="P-loop containing nucleotide triphosphate hydrolases"/>
    <property type="match status" value="1"/>
</dbReference>
<dbReference type="Gene3D" id="2.40.30.10">
    <property type="entry name" value="Translation factors"/>
    <property type="match status" value="2"/>
</dbReference>
<dbReference type="HAMAP" id="MF_00118_B">
    <property type="entry name" value="EF_Tu_B"/>
    <property type="match status" value="1"/>
</dbReference>
<dbReference type="InterPro" id="IPR041709">
    <property type="entry name" value="EF-Tu_GTP-bd"/>
</dbReference>
<dbReference type="InterPro" id="IPR050055">
    <property type="entry name" value="EF-Tu_GTPase"/>
</dbReference>
<dbReference type="InterPro" id="IPR004161">
    <property type="entry name" value="EFTu-like_2"/>
</dbReference>
<dbReference type="InterPro" id="IPR033720">
    <property type="entry name" value="EFTU_2"/>
</dbReference>
<dbReference type="InterPro" id="IPR031157">
    <property type="entry name" value="G_TR_CS"/>
</dbReference>
<dbReference type="InterPro" id="IPR027417">
    <property type="entry name" value="P-loop_NTPase"/>
</dbReference>
<dbReference type="InterPro" id="IPR005225">
    <property type="entry name" value="Small_GTP-bd"/>
</dbReference>
<dbReference type="InterPro" id="IPR000795">
    <property type="entry name" value="T_Tr_GTP-bd_dom"/>
</dbReference>
<dbReference type="InterPro" id="IPR009000">
    <property type="entry name" value="Transl_B-barrel_sf"/>
</dbReference>
<dbReference type="InterPro" id="IPR009001">
    <property type="entry name" value="Transl_elong_EF1A/Init_IF2_C"/>
</dbReference>
<dbReference type="InterPro" id="IPR004541">
    <property type="entry name" value="Transl_elong_EFTu/EF1A_bac/org"/>
</dbReference>
<dbReference type="InterPro" id="IPR004160">
    <property type="entry name" value="Transl_elong_EFTu/EF1A_C"/>
</dbReference>
<dbReference type="NCBIfam" id="TIGR00485">
    <property type="entry name" value="EF-Tu"/>
    <property type="match status" value="1"/>
</dbReference>
<dbReference type="NCBIfam" id="NF000766">
    <property type="entry name" value="PRK00049.1"/>
    <property type="match status" value="1"/>
</dbReference>
<dbReference type="NCBIfam" id="NF009372">
    <property type="entry name" value="PRK12735.1"/>
    <property type="match status" value="1"/>
</dbReference>
<dbReference type="NCBIfam" id="NF009373">
    <property type="entry name" value="PRK12736.1"/>
    <property type="match status" value="1"/>
</dbReference>
<dbReference type="NCBIfam" id="TIGR00231">
    <property type="entry name" value="small_GTP"/>
    <property type="match status" value="1"/>
</dbReference>
<dbReference type="PANTHER" id="PTHR43721:SF22">
    <property type="entry name" value="ELONGATION FACTOR TU, MITOCHONDRIAL"/>
    <property type="match status" value="1"/>
</dbReference>
<dbReference type="PANTHER" id="PTHR43721">
    <property type="entry name" value="ELONGATION FACTOR TU-RELATED"/>
    <property type="match status" value="1"/>
</dbReference>
<dbReference type="Pfam" id="PF00009">
    <property type="entry name" value="GTP_EFTU"/>
    <property type="match status" value="1"/>
</dbReference>
<dbReference type="Pfam" id="PF03144">
    <property type="entry name" value="GTP_EFTU_D2"/>
    <property type="match status" value="1"/>
</dbReference>
<dbReference type="Pfam" id="PF03143">
    <property type="entry name" value="GTP_EFTU_D3"/>
    <property type="match status" value="1"/>
</dbReference>
<dbReference type="PRINTS" id="PR00315">
    <property type="entry name" value="ELONGATNFCT"/>
</dbReference>
<dbReference type="SUPFAM" id="SSF50465">
    <property type="entry name" value="EF-Tu/eEF-1alpha/eIF2-gamma C-terminal domain"/>
    <property type="match status" value="1"/>
</dbReference>
<dbReference type="SUPFAM" id="SSF52540">
    <property type="entry name" value="P-loop containing nucleoside triphosphate hydrolases"/>
    <property type="match status" value="1"/>
</dbReference>
<dbReference type="SUPFAM" id="SSF50447">
    <property type="entry name" value="Translation proteins"/>
    <property type="match status" value="1"/>
</dbReference>
<dbReference type="PROSITE" id="PS00301">
    <property type="entry name" value="G_TR_1"/>
    <property type="match status" value="1"/>
</dbReference>
<dbReference type="PROSITE" id="PS51722">
    <property type="entry name" value="G_TR_2"/>
    <property type="match status" value="1"/>
</dbReference>
<proteinExistence type="inferred from homology"/>
<accession>A4T1R2</accession>
<organism>
    <name type="scientific">Mycolicibacterium gilvum (strain PYR-GCK)</name>
    <name type="common">Mycobacterium gilvum (strain PYR-GCK)</name>
    <dbReference type="NCBI Taxonomy" id="350054"/>
    <lineage>
        <taxon>Bacteria</taxon>
        <taxon>Bacillati</taxon>
        <taxon>Actinomycetota</taxon>
        <taxon>Actinomycetes</taxon>
        <taxon>Mycobacteriales</taxon>
        <taxon>Mycobacteriaceae</taxon>
        <taxon>Mycolicibacterium</taxon>
    </lineage>
</organism>
<reference key="1">
    <citation type="submission" date="2007-04" db="EMBL/GenBank/DDBJ databases">
        <title>Complete sequence of chromosome of Mycobacterium gilvum PYR-GCK.</title>
        <authorList>
            <consortium name="US DOE Joint Genome Institute"/>
            <person name="Copeland A."/>
            <person name="Lucas S."/>
            <person name="Lapidus A."/>
            <person name="Barry K."/>
            <person name="Detter J.C."/>
            <person name="Glavina del Rio T."/>
            <person name="Hammon N."/>
            <person name="Israni S."/>
            <person name="Dalin E."/>
            <person name="Tice H."/>
            <person name="Pitluck S."/>
            <person name="Chain P."/>
            <person name="Malfatti S."/>
            <person name="Shin M."/>
            <person name="Vergez L."/>
            <person name="Schmutz J."/>
            <person name="Larimer F."/>
            <person name="Land M."/>
            <person name="Hauser L."/>
            <person name="Kyrpides N."/>
            <person name="Mikhailova N."/>
            <person name="Miller C."/>
            <person name="Richardson P."/>
        </authorList>
    </citation>
    <scope>NUCLEOTIDE SEQUENCE [LARGE SCALE GENOMIC DNA]</scope>
    <source>
        <strain>PYR-GCK</strain>
    </source>
</reference>
<keyword id="KW-0963">Cytoplasm</keyword>
<keyword id="KW-0251">Elongation factor</keyword>
<keyword id="KW-0342">GTP-binding</keyword>
<keyword id="KW-0378">Hydrolase</keyword>
<keyword id="KW-0460">Magnesium</keyword>
<keyword id="KW-0479">Metal-binding</keyword>
<keyword id="KW-0547">Nucleotide-binding</keyword>
<keyword id="KW-0648">Protein biosynthesis</keyword>
<evidence type="ECO:0000250" key="1"/>
<evidence type="ECO:0000255" key="2">
    <source>
        <dbReference type="HAMAP-Rule" id="MF_00118"/>
    </source>
</evidence>
<name>EFTU_MYCGI</name>
<feature type="chain" id="PRO_1000076104" description="Elongation factor Tu">
    <location>
        <begin position="1"/>
        <end position="396"/>
    </location>
</feature>
<feature type="domain" description="tr-type G">
    <location>
        <begin position="10"/>
        <end position="205"/>
    </location>
</feature>
<feature type="region of interest" description="G1" evidence="1">
    <location>
        <begin position="19"/>
        <end position="26"/>
    </location>
</feature>
<feature type="region of interest" description="G2" evidence="1">
    <location>
        <begin position="62"/>
        <end position="66"/>
    </location>
</feature>
<feature type="region of interest" description="G3" evidence="1">
    <location>
        <begin position="83"/>
        <end position="86"/>
    </location>
</feature>
<feature type="region of interest" description="G4" evidence="1">
    <location>
        <begin position="138"/>
        <end position="141"/>
    </location>
</feature>
<feature type="region of interest" description="G5" evidence="1">
    <location>
        <begin position="175"/>
        <end position="177"/>
    </location>
</feature>
<feature type="binding site" evidence="2">
    <location>
        <begin position="19"/>
        <end position="26"/>
    </location>
    <ligand>
        <name>GTP</name>
        <dbReference type="ChEBI" id="CHEBI:37565"/>
    </ligand>
</feature>
<feature type="binding site" evidence="2">
    <location>
        <position position="26"/>
    </location>
    <ligand>
        <name>Mg(2+)</name>
        <dbReference type="ChEBI" id="CHEBI:18420"/>
    </ligand>
</feature>
<feature type="binding site" evidence="2">
    <location>
        <begin position="83"/>
        <end position="87"/>
    </location>
    <ligand>
        <name>GTP</name>
        <dbReference type="ChEBI" id="CHEBI:37565"/>
    </ligand>
</feature>
<feature type="binding site" evidence="2">
    <location>
        <begin position="138"/>
        <end position="141"/>
    </location>
    <ligand>
        <name>GTP</name>
        <dbReference type="ChEBI" id="CHEBI:37565"/>
    </ligand>
</feature>
<comment type="function">
    <text evidence="2">GTP hydrolase that promotes the GTP-dependent binding of aminoacyl-tRNA to the A-site of ribosomes during protein biosynthesis.</text>
</comment>
<comment type="catalytic activity">
    <reaction evidence="2">
        <text>GTP + H2O = GDP + phosphate + H(+)</text>
        <dbReference type="Rhea" id="RHEA:19669"/>
        <dbReference type="ChEBI" id="CHEBI:15377"/>
        <dbReference type="ChEBI" id="CHEBI:15378"/>
        <dbReference type="ChEBI" id="CHEBI:37565"/>
        <dbReference type="ChEBI" id="CHEBI:43474"/>
        <dbReference type="ChEBI" id="CHEBI:58189"/>
        <dbReference type="EC" id="3.6.5.3"/>
    </reaction>
    <physiologicalReaction direction="left-to-right" evidence="2">
        <dbReference type="Rhea" id="RHEA:19670"/>
    </physiologicalReaction>
</comment>
<comment type="subunit">
    <text evidence="2">Monomer.</text>
</comment>
<comment type="subcellular location">
    <subcellularLocation>
        <location evidence="2">Cytoplasm</location>
    </subcellularLocation>
</comment>
<comment type="similarity">
    <text evidence="2">Belongs to the TRAFAC class translation factor GTPase superfamily. Classic translation factor GTPase family. EF-Tu/EF-1A subfamily.</text>
</comment>
<protein>
    <recommendedName>
        <fullName evidence="2">Elongation factor Tu</fullName>
        <shortName evidence="2">EF-Tu</shortName>
        <ecNumber evidence="2">3.6.5.3</ecNumber>
    </recommendedName>
</protein>